<accession>B1VGM0</accession>
<gene>
    <name evidence="1" type="primary">rpmA</name>
    <name type="ordered locus">cu1367</name>
</gene>
<protein>
    <recommendedName>
        <fullName evidence="1">Large ribosomal subunit protein bL27</fullName>
    </recommendedName>
    <alternativeName>
        <fullName evidence="3">50S ribosomal protein L27</fullName>
    </alternativeName>
</protein>
<keyword id="KW-1185">Reference proteome</keyword>
<keyword id="KW-0687">Ribonucleoprotein</keyword>
<keyword id="KW-0689">Ribosomal protein</keyword>
<evidence type="ECO:0000255" key="1">
    <source>
        <dbReference type="HAMAP-Rule" id="MF_00539"/>
    </source>
</evidence>
<evidence type="ECO:0000256" key="2">
    <source>
        <dbReference type="SAM" id="MobiDB-lite"/>
    </source>
</evidence>
<evidence type="ECO:0000305" key="3"/>
<reference key="1">
    <citation type="journal article" date="2008" name="J. Biotechnol.">
        <title>The lifestyle of Corynebacterium urealyticum derived from its complete genome sequence established by pyrosequencing.</title>
        <authorList>
            <person name="Tauch A."/>
            <person name="Trost E."/>
            <person name="Tilker A."/>
            <person name="Ludewig U."/>
            <person name="Schneiker S."/>
            <person name="Goesmann A."/>
            <person name="Arnold W."/>
            <person name="Bekel T."/>
            <person name="Brinkrolf K."/>
            <person name="Brune I."/>
            <person name="Goetker S."/>
            <person name="Kalinowski J."/>
            <person name="Kamp P.-B."/>
            <person name="Lobo F.P."/>
            <person name="Viehoever P."/>
            <person name="Weisshaar B."/>
            <person name="Soriano F."/>
            <person name="Droege M."/>
            <person name="Puehler A."/>
        </authorList>
    </citation>
    <scope>NUCLEOTIDE SEQUENCE [LARGE SCALE GENOMIC DNA]</scope>
    <source>
        <strain>ATCC 43042 / DSM 7109</strain>
    </source>
</reference>
<organism>
    <name type="scientific">Corynebacterium urealyticum (strain ATCC 43042 / DSM 7109)</name>
    <dbReference type="NCBI Taxonomy" id="504474"/>
    <lineage>
        <taxon>Bacteria</taxon>
        <taxon>Bacillati</taxon>
        <taxon>Actinomycetota</taxon>
        <taxon>Actinomycetes</taxon>
        <taxon>Mycobacteriales</taxon>
        <taxon>Corynebacteriaceae</taxon>
        <taxon>Corynebacterium</taxon>
    </lineage>
</organism>
<comment type="similarity">
    <text evidence="1">Belongs to the bacterial ribosomal protein bL27 family.</text>
</comment>
<name>RL27_CORU7</name>
<dbReference type="EMBL" id="AM942444">
    <property type="protein sequence ID" value="CAQ05327.1"/>
    <property type="molecule type" value="Genomic_DNA"/>
</dbReference>
<dbReference type="RefSeq" id="WP_012360615.1">
    <property type="nucleotide sequence ID" value="NC_010545.1"/>
</dbReference>
<dbReference type="SMR" id="B1VGM0"/>
<dbReference type="STRING" id="504474.cu1367"/>
<dbReference type="GeneID" id="60604147"/>
<dbReference type="KEGG" id="cur:cu1367"/>
<dbReference type="eggNOG" id="COG0211">
    <property type="taxonomic scope" value="Bacteria"/>
</dbReference>
<dbReference type="HOGENOM" id="CLU_095424_4_0_11"/>
<dbReference type="Proteomes" id="UP000001727">
    <property type="component" value="Chromosome"/>
</dbReference>
<dbReference type="GO" id="GO:0022625">
    <property type="term" value="C:cytosolic large ribosomal subunit"/>
    <property type="evidence" value="ECO:0007669"/>
    <property type="project" value="TreeGrafter"/>
</dbReference>
<dbReference type="GO" id="GO:0003735">
    <property type="term" value="F:structural constituent of ribosome"/>
    <property type="evidence" value="ECO:0007669"/>
    <property type="project" value="InterPro"/>
</dbReference>
<dbReference type="GO" id="GO:0006412">
    <property type="term" value="P:translation"/>
    <property type="evidence" value="ECO:0007669"/>
    <property type="project" value="UniProtKB-UniRule"/>
</dbReference>
<dbReference type="FunFam" id="2.40.50.100:FF:000020">
    <property type="entry name" value="50S ribosomal protein L27"/>
    <property type="match status" value="1"/>
</dbReference>
<dbReference type="Gene3D" id="2.40.50.100">
    <property type="match status" value="1"/>
</dbReference>
<dbReference type="HAMAP" id="MF_00539">
    <property type="entry name" value="Ribosomal_bL27"/>
    <property type="match status" value="1"/>
</dbReference>
<dbReference type="InterPro" id="IPR001684">
    <property type="entry name" value="Ribosomal_bL27"/>
</dbReference>
<dbReference type="InterPro" id="IPR018261">
    <property type="entry name" value="Ribosomal_bL27_CS"/>
</dbReference>
<dbReference type="NCBIfam" id="TIGR00062">
    <property type="entry name" value="L27"/>
    <property type="match status" value="1"/>
</dbReference>
<dbReference type="PANTHER" id="PTHR15893:SF0">
    <property type="entry name" value="LARGE RIBOSOMAL SUBUNIT PROTEIN BL27M"/>
    <property type="match status" value="1"/>
</dbReference>
<dbReference type="PANTHER" id="PTHR15893">
    <property type="entry name" value="RIBOSOMAL PROTEIN L27"/>
    <property type="match status" value="1"/>
</dbReference>
<dbReference type="Pfam" id="PF01016">
    <property type="entry name" value="Ribosomal_L27"/>
    <property type="match status" value="1"/>
</dbReference>
<dbReference type="PRINTS" id="PR00063">
    <property type="entry name" value="RIBOSOMALL27"/>
</dbReference>
<dbReference type="SUPFAM" id="SSF110324">
    <property type="entry name" value="Ribosomal L27 protein-like"/>
    <property type="match status" value="1"/>
</dbReference>
<dbReference type="PROSITE" id="PS00831">
    <property type="entry name" value="RIBOSOMAL_L27"/>
    <property type="match status" value="1"/>
</dbReference>
<proteinExistence type="inferred from homology"/>
<sequence>MATKKGASSSSNGRDSEAKRLGVKRFGGQQVKAGEILIRQRGTKFHPGVNVGRGGDDTLFALKAGAVQFSTKRNRRLVNIVEDEAVEA</sequence>
<feature type="chain" id="PRO_1000128726" description="Large ribosomal subunit protein bL27">
    <location>
        <begin position="1"/>
        <end position="88"/>
    </location>
</feature>
<feature type="region of interest" description="Disordered" evidence="2">
    <location>
        <begin position="1"/>
        <end position="23"/>
    </location>
</feature>
<feature type="compositionally biased region" description="Polar residues" evidence="2">
    <location>
        <begin position="1"/>
        <end position="13"/>
    </location>
</feature>